<comment type="function">
    <text evidence="1">Involved in the initiation of assembly of the COPII coat required for the formation of transport vesicles from the endoplasmic reticulum (ER) and the selection of cargo molecules. Also involved in autophagy (By similarity).</text>
</comment>
<comment type="subcellular location">
    <subcellularLocation>
        <location evidence="1">Endoplasmic reticulum membrane</location>
        <topology evidence="1">Peripheral membrane protein</topology>
        <orientation evidence="1">Cytoplasmic side</orientation>
    </subcellularLocation>
</comment>
<comment type="similarity">
    <text evidence="3">Belongs to the SEC16 family.</text>
</comment>
<comment type="sequence caution" evidence="3">
    <conflict type="erroneous gene model prediction">
        <sequence resource="EMBL-CDS" id="CAL00966"/>
    </conflict>
</comment>
<feature type="chain" id="PRO_0000295530" description="COPII coat assembly protein sec16">
    <location>
        <begin position="1"/>
        <end position="1914"/>
    </location>
</feature>
<feature type="repeat" description="1">
    <location>
        <begin position="315"/>
        <end position="341"/>
    </location>
</feature>
<feature type="repeat" description="2">
    <location>
        <begin position="342"/>
        <end position="368"/>
    </location>
</feature>
<feature type="repeat" description="3">
    <location>
        <begin position="369"/>
        <end position="395"/>
    </location>
</feature>
<feature type="repeat" description="4">
    <location>
        <begin position="396"/>
        <end position="422"/>
    </location>
</feature>
<feature type="region of interest" description="Disordered" evidence="2">
    <location>
        <begin position="1"/>
        <end position="31"/>
    </location>
</feature>
<feature type="region of interest" description="Disordered" evidence="2">
    <location>
        <begin position="58"/>
        <end position="294"/>
    </location>
</feature>
<feature type="region of interest" description="4 X 27 AA approximate tandem repeats">
    <location>
        <begin position="315"/>
        <end position="422"/>
    </location>
</feature>
<feature type="region of interest" description="Disordered" evidence="2">
    <location>
        <begin position="352"/>
        <end position="376"/>
    </location>
</feature>
<feature type="region of interest" description="Disordered" evidence="2">
    <location>
        <begin position="469"/>
        <end position="873"/>
    </location>
</feature>
<feature type="region of interest" description="Disordered" evidence="2">
    <location>
        <begin position="1506"/>
        <end position="1568"/>
    </location>
</feature>
<feature type="region of interest" description="Disordered" evidence="2">
    <location>
        <begin position="1600"/>
        <end position="1763"/>
    </location>
</feature>
<feature type="region of interest" description="Disordered" evidence="2">
    <location>
        <begin position="1776"/>
        <end position="1914"/>
    </location>
</feature>
<feature type="compositionally biased region" description="Basic and acidic residues" evidence="2">
    <location>
        <begin position="110"/>
        <end position="130"/>
    </location>
</feature>
<feature type="compositionally biased region" description="Polar residues" evidence="2">
    <location>
        <begin position="142"/>
        <end position="160"/>
    </location>
</feature>
<feature type="compositionally biased region" description="Polar residues" evidence="2">
    <location>
        <begin position="285"/>
        <end position="294"/>
    </location>
</feature>
<feature type="compositionally biased region" description="Polar residues" evidence="2">
    <location>
        <begin position="512"/>
        <end position="521"/>
    </location>
</feature>
<feature type="compositionally biased region" description="Low complexity" evidence="2">
    <location>
        <begin position="526"/>
        <end position="540"/>
    </location>
</feature>
<feature type="compositionally biased region" description="Basic and acidic residues" evidence="2">
    <location>
        <begin position="558"/>
        <end position="567"/>
    </location>
</feature>
<feature type="compositionally biased region" description="Pro residues" evidence="2">
    <location>
        <begin position="596"/>
        <end position="621"/>
    </location>
</feature>
<feature type="compositionally biased region" description="Pro residues" evidence="2">
    <location>
        <begin position="671"/>
        <end position="680"/>
    </location>
</feature>
<feature type="compositionally biased region" description="Low complexity" evidence="2">
    <location>
        <begin position="709"/>
        <end position="721"/>
    </location>
</feature>
<feature type="compositionally biased region" description="Pro residues" evidence="2">
    <location>
        <begin position="743"/>
        <end position="763"/>
    </location>
</feature>
<feature type="compositionally biased region" description="Polar residues" evidence="2">
    <location>
        <begin position="849"/>
        <end position="860"/>
    </location>
</feature>
<feature type="compositionally biased region" description="Polar residues" evidence="2">
    <location>
        <begin position="1506"/>
        <end position="1528"/>
    </location>
</feature>
<feature type="compositionally biased region" description="Low complexity" evidence="2">
    <location>
        <begin position="1532"/>
        <end position="1543"/>
    </location>
</feature>
<feature type="compositionally biased region" description="Polar residues" evidence="2">
    <location>
        <begin position="1555"/>
        <end position="1566"/>
    </location>
</feature>
<feature type="compositionally biased region" description="Basic and acidic residues" evidence="2">
    <location>
        <begin position="1702"/>
        <end position="1724"/>
    </location>
</feature>
<feature type="compositionally biased region" description="Low complexity" evidence="2">
    <location>
        <begin position="1725"/>
        <end position="1736"/>
    </location>
</feature>
<feature type="compositionally biased region" description="Low complexity" evidence="2">
    <location>
        <begin position="1798"/>
        <end position="1809"/>
    </location>
</feature>
<feature type="compositionally biased region" description="Pro residues" evidence="2">
    <location>
        <begin position="1810"/>
        <end position="1827"/>
    </location>
</feature>
<feature type="compositionally biased region" description="Polar residues" evidence="2">
    <location>
        <begin position="1852"/>
        <end position="1866"/>
    </location>
</feature>
<accession>A2R4T4</accession>
<organism>
    <name type="scientific">Aspergillus niger (strain ATCC MYA-4892 / CBS 513.88 / FGSC A1513)</name>
    <dbReference type="NCBI Taxonomy" id="425011"/>
    <lineage>
        <taxon>Eukaryota</taxon>
        <taxon>Fungi</taxon>
        <taxon>Dikarya</taxon>
        <taxon>Ascomycota</taxon>
        <taxon>Pezizomycotina</taxon>
        <taxon>Eurotiomycetes</taxon>
        <taxon>Eurotiomycetidae</taxon>
        <taxon>Eurotiales</taxon>
        <taxon>Aspergillaceae</taxon>
        <taxon>Aspergillus</taxon>
        <taxon>Aspergillus subgen. Circumdati</taxon>
    </lineage>
</organism>
<proteinExistence type="inferred from homology"/>
<reference key="1">
    <citation type="journal article" date="2007" name="Nat. Biotechnol.">
        <title>Genome sequencing and analysis of the versatile cell factory Aspergillus niger CBS 513.88.</title>
        <authorList>
            <person name="Pel H.J."/>
            <person name="de Winde J.H."/>
            <person name="Archer D.B."/>
            <person name="Dyer P.S."/>
            <person name="Hofmann G."/>
            <person name="Schaap P.J."/>
            <person name="Turner G."/>
            <person name="de Vries R.P."/>
            <person name="Albang R."/>
            <person name="Albermann K."/>
            <person name="Andersen M.R."/>
            <person name="Bendtsen J.D."/>
            <person name="Benen J.A.E."/>
            <person name="van den Berg M."/>
            <person name="Breestraat S."/>
            <person name="Caddick M.X."/>
            <person name="Contreras R."/>
            <person name="Cornell M."/>
            <person name="Coutinho P.M."/>
            <person name="Danchin E.G.J."/>
            <person name="Debets A.J.M."/>
            <person name="Dekker P."/>
            <person name="van Dijck P.W.M."/>
            <person name="van Dijk A."/>
            <person name="Dijkhuizen L."/>
            <person name="Driessen A.J.M."/>
            <person name="d'Enfert C."/>
            <person name="Geysens S."/>
            <person name="Goosen C."/>
            <person name="Groot G.S.P."/>
            <person name="de Groot P.W.J."/>
            <person name="Guillemette T."/>
            <person name="Henrissat B."/>
            <person name="Herweijer M."/>
            <person name="van den Hombergh J.P.T.W."/>
            <person name="van den Hondel C.A.M.J.J."/>
            <person name="van der Heijden R.T.J.M."/>
            <person name="van der Kaaij R.M."/>
            <person name="Klis F.M."/>
            <person name="Kools H.J."/>
            <person name="Kubicek C.P."/>
            <person name="van Kuyk P.A."/>
            <person name="Lauber J."/>
            <person name="Lu X."/>
            <person name="van der Maarel M.J.E.C."/>
            <person name="Meulenberg R."/>
            <person name="Menke H."/>
            <person name="Mortimer M.A."/>
            <person name="Nielsen J."/>
            <person name="Oliver S.G."/>
            <person name="Olsthoorn M."/>
            <person name="Pal K."/>
            <person name="van Peij N.N.M.E."/>
            <person name="Ram A.F.J."/>
            <person name="Rinas U."/>
            <person name="Roubos J.A."/>
            <person name="Sagt C.M.J."/>
            <person name="Schmoll M."/>
            <person name="Sun J."/>
            <person name="Ussery D."/>
            <person name="Varga J."/>
            <person name="Vervecken W."/>
            <person name="van de Vondervoort P.J.J."/>
            <person name="Wedler H."/>
            <person name="Woesten H.A.B."/>
            <person name="Zeng A.-P."/>
            <person name="van Ooyen A.J.J."/>
            <person name="Visser J."/>
            <person name="Stam H."/>
        </authorList>
    </citation>
    <scope>NUCLEOTIDE SEQUENCE [LARGE SCALE GENOMIC DNA]</scope>
    <source>
        <strain>ATCC MYA-4892 / CBS 513.88 / FGSC A1513</strain>
    </source>
</reference>
<protein>
    <recommendedName>
        <fullName>COPII coat assembly protein sec16</fullName>
    </recommendedName>
    <alternativeName>
        <fullName>Protein transport protein sec16</fullName>
    </alternativeName>
</protein>
<name>SEC16_ASPNC</name>
<gene>
    <name type="primary">sec16</name>
    <name type="ORF">An15g01520</name>
</gene>
<dbReference type="EMBL" id="AM270336">
    <property type="protein sequence ID" value="CAL00966.1"/>
    <property type="status" value="ALT_SEQ"/>
    <property type="molecule type" value="Genomic_DNA"/>
</dbReference>
<dbReference type="EnsemblFungi" id="CAL00966">
    <property type="protein sequence ID" value="CAL00966"/>
    <property type="gene ID" value="An15g01520"/>
</dbReference>
<dbReference type="Proteomes" id="UP000006706">
    <property type="component" value="Chromosome 3R"/>
</dbReference>
<dbReference type="GO" id="GO:0070971">
    <property type="term" value="C:endoplasmic reticulum exit site"/>
    <property type="evidence" value="ECO:0007669"/>
    <property type="project" value="UniProtKB-ARBA"/>
</dbReference>
<dbReference type="GO" id="GO:0005789">
    <property type="term" value="C:endoplasmic reticulum membrane"/>
    <property type="evidence" value="ECO:0007669"/>
    <property type="project" value="UniProtKB-SubCell"/>
</dbReference>
<dbReference type="GO" id="GO:0012507">
    <property type="term" value="C:ER to Golgi transport vesicle membrane"/>
    <property type="evidence" value="ECO:0007669"/>
    <property type="project" value="TreeGrafter"/>
</dbReference>
<dbReference type="GO" id="GO:0006914">
    <property type="term" value="P:autophagy"/>
    <property type="evidence" value="ECO:0007669"/>
    <property type="project" value="UniProtKB-KW"/>
</dbReference>
<dbReference type="GO" id="GO:0007030">
    <property type="term" value="P:Golgi organization"/>
    <property type="evidence" value="ECO:0007669"/>
    <property type="project" value="TreeGrafter"/>
</dbReference>
<dbReference type="GO" id="GO:0046907">
    <property type="term" value="P:intracellular transport"/>
    <property type="evidence" value="ECO:0007669"/>
    <property type="project" value="UniProtKB-ARBA"/>
</dbReference>
<dbReference type="GO" id="GO:0070973">
    <property type="term" value="P:protein localization to endoplasmic reticulum exit site"/>
    <property type="evidence" value="ECO:0007669"/>
    <property type="project" value="TreeGrafter"/>
</dbReference>
<dbReference type="GO" id="GO:0015031">
    <property type="term" value="P:protein transport"/>
    <property type="evidence" value="ECO:0007669"/>
    <property type="project" value="UniProtKB-KW"/>
</dbReference>
<dbReference type="GO" id="GO:0016192">
    <property type="term" value="P:vesicle-mediated transport"/>
    <property type="evidence" value="ECO:0007669"/>
    <property type="project" value="UniProtKB-KW"/>
</dbReference>
<dbReference type="CDD" id="cd09233">
    <property type="entry name" value="ACE1-Sec16-like"/>
    <property type="match status" value="1"/>
</dbReference>
<dbReference type="FunFam" id="1.25.40.1030:FF:000008">
    <property type="entry name" value="Protein transport protein sec16"/>
    <property type="match status" value="1"/>
</dbReference>
<dbReference type="Gene3D" id="1.25.40.1030">
    <property type="match status" value="1"/>
</dbReference>
<dbReference type="InterPro" id="IPR024340">
    <property type="entry name" value="Sec16_CCD"/>
</dbReference>
<dbReference type="InterPro" id="IPR024468">
    <property type="entry name" value="Sec16_N"/>
</dbReference>
<dbReference type="InterPro" id="IPR024298">
    <property type="entry name" value="Sec16_Sec23-bd"/>
</dbReference>
<dbReference type="PANTHER" id="PTHR13402">
    <property type="entry name" value="RGPR-RELATED"/>
    <property type="match status" value="1"/>
</dbReference>
<dbReference type="PANTHER" id="PTHR13402:SF6">
    <property type="entry name" value="SECRETORY 16, ISOFORM I"/>
    <property type="match status" value="1"/>
</dbReference>
<dbReference type="Pfam" id="PF12932">
    <property type="entry name" value="Sec16"/>
    <property type="match status" value="1"/>
</dbReference>
<dbReference type="Pfam" id="PF12935">
    <property type="entry name" value="Sec16_N"/>
    <property type="match status" value="2"/>
</dbReference>
<dbReference type="Pfam" id="PF12931">
    <property type="entry name" value="TPR_Sec16"/>
    <property type="match status" value="1"/>
</dbReference>
<sequence>MAQSDVAAVWNPALRSDDNATPVPTGPASLEIDTSIEATTIPLGSPMETPHEYSISDIAFPDSDTAAPPQEAASPDMIDTEPLPNPDQIPARDEVLEAPSADVEATPEISYDHETPNLDAPQTEHAHDNEAMPLDDPEDQVTEAQPAQPQAEDSISTEATAAQDMDVEEQSSTPHAGDQDGTEPADTNGEAHSSHDIWGSPAKENSAEDDFFNQLKTQTKPIYVPPENESRFEEGVPLLDDSAESPVEPTATQEGQIDNLFTDDNDEDDGFFKAVQSSPPPDKSQPASHITRKSTFQVMDSLGFSLDSPMSDADPAAQEFDNALAAATTNNSVGISAFEEDPAAQEFDNVLAAAATDNSADKPSSEEDPAAQELDNVLAAATTNNSVGISAFEEDPAAQEFDNVLAAAATDNTVRKSSSEEDLAARWQAELAEEEAEVAPSEDDLAARWQMELDDDDDLLLEDDIGGATAEHAPTSQNINGATAGAAVPGLSSPFGTPQSSVRPGAPATAYTPHQPSTSDLLQGVPVPGAAPPANMAASADYFTQPPRPNVTANKAESFAERAKEGYRSPYDLPEDLTRPRRPVASHKPVVTQPGSTPPPPRSNSIPIPPPSTSMPPPPLGAQPDGAQSTAKVAAPKNFYEELPLPPPRPQSRPASSGRYTPGANAMPPASSHPPPPPANPYASLSTAPPAAAEAYSQPQVQQPEGLDPYASLSAPGASSGPAPPSATSRYSPKPPTLQAGIKPPPSPRYSPAPPPATAPPPRNRYASQPTAPPSQGVALPFQPRTSSPLAYHEKVSYRPQEPSEQQPSAMEQPAIIPPIEVQSQPTAPAEYSPIQPPEVPHVPEAVNMGSSVHQMSQQPMSPPRNQYAPPGYVDEFSKRIAPIANVPPAPVLPADDPTFVPPRRSMTQSPSQQTLGPRLSVPSVDPLQRPASVHGAGSPTKAVNPYAPAQMSAHNRVASQSLEFIPPTDDQQFDPLERWKGAPIVKFGFGGSVLSCFPKHIPRYSAGQATPKIKSTPGEVKTHQLSDWIPVPDTIARHPGPLKSKSKKKDLLAWLSSKIAAFENEGIPQAVYMHADSQKRSEEKILLWKVVRVLVEHDGVLEGSPEIQKSLRQIIFPHLQDVDSAQPYGNGLPSFSTAQSLDAPSRPDAADPQAVESIRNNLLVGEREKAVWGAVDHRLWGHAMIIASTMDKSVWKQVVQEFVRREVRSASGNTESLAALYEIFAGNVEESVDELVPPSARAGLQMVSKVDGHGTSKNALDGLDSWRDTLGLVLSNRSSEDYQALLALGRLLQSYGRTEAAHICFIFSRAAVFGGVDDPQASVVLLGADHQHLSLAALQDEDSILLTEAYEYATSVLSASPKPPLPHLLAFKLVYAWSLADQGRKSEAQQYCDAIAATLKATTKPSPYQHQHLYFGVDELSARLRQTTSDGGSSWISRPSMEKVSGSMWAKFNSFVAGEDNEAGSAGSAKAGDGDIGPFAKIAGTPTVSRSPSVSDIYGSYSAQPSYSSGPSRYQPNNQYAPTSSPEQLRGRSSLDSQRSSSYGFGFGQRRGSQEPSTPVESNMYQGGMLYNSPPAVGYQSTPPQTSYMPLAPVKEDLAPQAHAEASAGPVEQSYGSGSPYQPAGYGSFDQPFMNQVPSDGAGYMPPGVSSGYEPPAIESHPEPVAAPSEEVNEEEPAKKKSFMDDDDDDDIAARAAAIQKAERARKDREADEAFRKAAEADAQKPAPAKKSWFGGWFGGAAGGKKEDLNPNKPIRAKLGEENSFYYDKDLKKWVNKKDPNSATAARATPPPPRASGPPSRTASGSSAAPPPPASASPMMPPPSSRPPSTTGMPPPGSPAPSSLGVPPPSIQRSVSTGAAVSTPPSGLAAPPRPATSLSNASSIDDLLGAPTARKGAAAKGKKKGRYVDVMAK</sequence>
<evidence type="ECO:0000250" key="1"/>
<evidence type="ECO:0000256" key="2">
    <source>
        <dbReference type="SAM" id="MobiDB-lite"/>
    </source>
</evidence>
<evidence type="ECO:0000305" key="3"/>
<keyword id="KW-0072">Autophagy</keyword>
<keyword id="KW-0256">Endoplasmic reticulum</keyword>
<keyword id="KW-0931">ER-Golgi transport</keyword>
<keyword id="KW-0472">Membrane</keyword>
<keyword id="KW-0653">Protein transport</keyword>
<keyword id="KW-1185">Reference proteome</keyword>
<keyword id="KW-0677">Repeat</keyword>
<keyword id="KW-0813">Transport</keyword>